<proteinExistence type="inferred from homology"/>
<accession>A1TWI4</accession>
<comment type="function">
    <text evidence="1">Exhibits a very high intrinsic GTPase hydrolysis rate. Involved in the addition of a carboxymethylaminomethyl (cmnm) group at the wobble position (U34) of certain tRNAs, forming tRNA-cmnm(5)s(2)U34.</text>
</comment>
<comment type="cofactor">
    <cofactor evidence="1">
        <name>K(+)</name>
        <dbReference type="ChEBI" id="CHEBI:29103"/>
    </cofactor>
    <text evidence="1">Binds 1 potassium ion per subunit.</text>
</comment>
<comment type="subunit">
    <text evidence="1">Homodimer. Heterotetramer of two MnmE and two MnmG subunits.</text>
</comment>
<comment type="subcellular location">
    <subcellularLocation>
        <location evidence="1">Cytoplasm</location>
    </subcellularLocation>
</comment>
<comment type="similarity">
    <text evidence="1">Belongs to the TRAFAC class TrmE-Era-EngA-EngB-Septin-like GTPase superfamily. TrmE GTPase family.</text>
</comment>
<organism>
    <name type="scientific">Paracidovorax citrulli (strain AAC00-1)</name>
    <name type="common">Acidovorax citrulli</name>
    <dbReference type="NCBI Taxonomy" id="397945"/>
    <lineage>
        <taxon>Bacteria</taxon>
        <taxon>Pseudomonadati</taxon>
        <taxon>Pseudomonadota</taxon>
        <taxon>Betaproteobacteria</taxon>
        <taxon>Burkholderiales</taxon>
        <taxon>Comamonadaceae</taxon>
        <taxon>Paracidovorax</taxon>
    </lineage>
</organism>
<feature type="chain" id="PRO_0000345695" description="tRNA modification GTPase MnmE">
    <location>
        <begin position="1"/>
        <end position="482"/>
    </location>
</feature>
<feature type="domain" description="TrmE-type G">
    <location>
        <begin position="231"/>
        <end position="404"/>
    </location>
</feature>
<feature type="binding site" evidence="1">
    <location>
        <position position="25"/>
    </location>
    <ligand>
        <name>(6S)-5-formyl-5,6,7,8-tetrahydrofolate</name>
        <dbReference type="ChEBI" id="CHEBI:57457"/>
    </ligand>
</feature>
<feature type="binding site" evidence="1">
    <location>
        <position position="82"/>
    </location>
    <ligand>
        <name>(6S)-5-formyl-5,6,7,8-tetrahydrofolate</name>
        <dbReference type="ChEBI" id="CHEBI:57457"/>
    </ligand>
</feature>
<feature type="binding site" evidence="1">
    <location>
        <position position="135"/>
    </location>
    <ligand>
        <name>(6S)-5-formyl-5,6,7,8-tetrahydrofolate</name>
        <dbReference type="ChEBI" id="CHEBI:57457"/>
    </ligand>
</feature>
<feature type="binding site" evidence="1">
    <location>
        <begin position="241"/>
        <end position="246"/>
    </location>
    <ligand>
        <name>GTP</name>
        <dbReference type="ChEBI" id="CHEBI:37565"/>
    </ligand>
</feature>
<feature type="binding site" evidence="1">
    <location>
        <position position="241"/>
    </location>
    <ligand>
        <name>K(+)</name>
        <dbReference type="ChEBI" id="CHEBI:29103"/>
    </ligand>
</feature>
<feature type="binding site" evidence="1">
    <location>
        <position position="245"/>
    </location>
    <ligand>
        <name>Mg(2+)</name>
        <dbReference type="ChEBI" id="CHEBI:18420"/>
    </ligand>
</feature>
<feature type="binding site" evidence="1">
    <location>
        <begin position="260"/>
        <end position="266"/>
    </location>
    <ligand>
        <name>GTP</name>
        <dbReference type="ChEBI" id="CHEBI:37565"/>
    </ligand>
</feature>
<feature type="binding site" evidence="1">
    <location>
        <position position="260"/>
    </location>
    <ligand>
        <name>K(+)</name>
        <dbReference type="ChEBI" id="CHEBI:29103"/>
    </ligand>
</feature>
<feature type="binding site" evidence="1">
    <location>
        <position position="262"/>
    </location>
    <ligand>
        <name>K(+)</name>
        <dbReference type="ChEBI" id="CHEBI:29103"/>
    </ligand>
</feature>
<feature type="binding site" evidence="1">
    <location>
        <position position="265"/>
    </location>
    <ligand>
        <name>K(+)</name>
        <dbReference type="ChEBI" id="CHEBI:29103"/>
    </ligand>
</feature>
<feature type="binding site" evidence="1">
    <location>
        <position position="266"/>
    </location>
    <ligand>
        <name>Mg(2+)</name>
        <dbReference type="ChEBI" id="CHEBI:18420"/>
    </ligand>
</feature>
<feature type="binding site" evidence="1">
    <location>
        <begin position="285"/>
        <end position="288"/>
    </location>
    <ligand>
        <name>GTP</name>
        <dbReference type="ChEBI" id="CHEBI:37565"/>
    </ligand>
</feature>
<feature type="binding site" evidence="1">
    <location>
        <begin position="385"/>
        <end position="387"/>
    </location>
    <ligand>
        <name>GTP</name>
        <dbReference type="ChEBI" id="CHEBI:37565"/>
    </ligand>
</feature>
<feature type="binding site" evidence="1">
    <location>
        <position position="482"/>
    </location>
    <ligand>
        <name>(6S)-5-formyl-5,6,7,8-tetrahydrofolate</name>
        <dbReference type="ChEBI" id="CHEBI:57457"/>
    </ligand>
</feature>
<dbReference type="EC" id="3.6.-.-" evidence="1"/>
<dbReference type="EMBL" id="CP000512">
    <property type="protein sequence ID" value="ABM35322.1"/>
    <property type="molecule type" value="Genomic_DNA"/>
</dbReference>
<dbReference type="RefSeq" id="WP_011797788.1">
    <property type="nucleotide sequence ID" value="NC_008752.1"/>
</dbReference>
<dbReference type="SMR" id="A1TWI4"/>
<dbReference type="STRING" id="397945.Aave_4791"/>
<dbReference type="GeneID" id="79789789"/>
<dbReference type="KEGG" id="aav:Aave_4791"/>
<dbReference type="eggNOG" id="COG0486">
    <property type="taxonomic scope" value="Bacteria"/>
</dbReference>
<dbReference type="HOGENOM" id="CLU_019624_4_1_4"/>
<dbReference type="OrthoDB" id="9805918at2"/>
<dbReference type="Proteomes" id="UP000002596">
    <property type="component" value="Chromosome"/>
</dbReference>
<dbReference type="GO" id="GO:0005829">
    <property type="term" value="C:cytosol"/>
    <property type="evidence" value="ECO:0007669"/>
    <property type="project" value="TreeGrafter"/>
</dbReference>
<dbReference type="GO" id="GO:0005525">
    <property type="term" value="F:GTP binding"/>
    <property type="evidence" value="ECO:0007669"/>
    <property type="project" value="UniProtKB-UniRule"/>
</dbReference>
<dbReference type="GO" id="GO:0003924">
    <property type="term" value="F:GTPase activity"/>
    <property type="evidence" value="ECO:0007669"/>
    <property type="project" value="UniProtKB-UniRule"/>
</dbReference>
<dbReference type="GO" id="GO:0046872">
    <property type="term" value="F:metal ion binding"/>
    <property type="evidence" value="ECO:0007669"/>
    <property type="project" value="UniProtKB-KW"/>
</dbReference>
<dbReference type="GO" id="GO:0030488">
    <property type="term" value="P:tRNA methylation"/>
    <property type="evidence" value="ECO:0007669"/>
    <property type="project" value="TreeGrafter"/>
</dbReference>
<dbReference type="GO" id="GO:0002098">
    <property type="term" value="P:tRNA wobble uridine modification"/>
    <property type="evidence" value="ECO:0007669"/>
    <property type="project" value="TreeGrafter"/>
</dbReference>
<dbReference type="CDD" id="cd04164">
    <property type="entry name" value="trmE"/>
    <property type="match status" value="1"/>
</dbReference>
<dbReference type="CDD" id="cd14858">
    <property type="entry name" value="TrmE_N"/>
    <property type="match status" value="1"/>
</dbReference>
<dbReference type="Gene3D" id="3.40.50.300">
    <property type="entry name" value="P-loop containing nucleotide triphosphate hydrolases"/>
    <property type="match status" value="1"/>
</dbReference>
<dbReference type="Gene3D" id="3.30.1360.120">
    <property type="entry name" value="Probable tRNA modification gtpase trme, domain 1"/>
    <property type="match status" value="1"/>
</dbReference>
<dbReference type="Gene3D" id="1.20.120.430">
    <property type="entry name" value="tRNA modification GTPase MnmE domain 2"/>
    <property type="match status" value="1"/>
</dbReference>
<dbReference type="HAMAP" id="MF_00379">
    <property type="entry name" value="GTPase_MnmE"/>
    <property type="match status" value="1"/>
</dbReference>
<dbReference type="InterPro" id="IPR031168">
    <property type="entry name" value="G_TrmE"/>
</dbReference>
<dbReference type="InterPro" id="IPR006073">
    <property type="entry name" value="GTP-bd"/>
</dbReference>
<dbReference type="InterPro" id="IPR018948">
    <property type="entry name" value="GTP-bd_TrmE_N"/>
</dbReference>
<dbReference type="InterPro" id="IPR004520">
    <property type="entry name" value="GTPase_MnmE"/>
</dbReference>
<dbReference type="InterPro" id="IPR027368">
    <property type="entry name" value="MnmE_dom2"/>
</dbReference>
<dbReference type="InterPro" id="IPR025867">
    <property type="entry name" value="MnmE_helical"/>
</dbReference>
<dbReference type="InterPro" id="IPR027417">
    <property type="entry name" value="P-loop_NTPase"/>
</dbReference>
<dbReference type="InterPro" id="IPR005225">
    <property type="entry name" value="Small_GTP-bd"/>
</dbReference>
<dbReference type="InterPro" id="IPR027266">
    <property type="entry name" value="TrmE/GcvT_dom1"/>
</dbReference>
<dbReference type="NCBIfam" id="TIGR00450">
    <property type="entry name" value="mnmE_trmE_thdF"/>
    <property type="match status" value="1"/>
</dbReference>
<dbReference type="NCBIfam" id="NF003661">
    <property type="entry name" value="PRK05291.1-3"/>
    <property type="match status" value="1"/>
</dbReference>
<dbReference type="NCBIfam" id="TIGR00231">
    <property type="entry name" value="small_GTP"/>
    <property type="match status" value="1"/>
</dbReference>
<dbReference type="PANTHER" id="PTHR42714">
    <property type="entry name" value="TRNA MODIFICATION GTPASE GTPBP3"/>
    <property type="match status" value="1"/>
</dbReference>
<dbReference type="PANTHER" id="PTHR42714:SF2">
    <property type="entry name" value="TRNA MODIFICATION GTPASE GTPBP3, MITOCHONDRIAL"/>
    <property type="match status" value="1"/>
</dbReference>
<dbReference type="Pfam" id="PF01926">
    <property type="entry name" value="MMR_HSR1"/>
    <property type="match status" value="1"/>
</dbReference>
<dbReference type="Pfam" id="PF12631">
    <property type="entry name" value="MnmE_helical"/>
    <property type="match status" value="1"/>
</dbReference>
<dbReference type="Pfam" id="PF10396">
    <property type="entry name" value="TrmE_N"/>
    <property type="match status" value="1"/>
</dbReference>
<dbReference type="SUPFAM" id="SSF52540">
    <property type="entry name" value="P-loop containing nucleoside triphosphate hydrolases"/>
    <property type="match status" value="1"/>
</dbReference>
<dbReference type="SUPFAM" id="SSF116878">
    <property type="entry name" value="TrmE connector domain"/>
    <property type="match status" value="1"/>
</dbReference>
<dbReference type="PROSITE" id="PS51709">
    <property type="entry name" value="G_TRME"/>
    <property type="match status" value="1"/>
</dbReference>
<gene>
    <name evidence="1" type="primary">mnmE</name>
    <name evidence="1" type="synonym">trmE</name>
    <name type="ordered locus">Aave_4791</name>
</gene>
<sequence>MLPRHTDPIAAIATAPGRGAVGIVRVSGRGIGPLVEALCGRALRPREATYLPFRDAGGQAIDQGLALYFPAPHSYTGEDVLELQAHGGPVVLQLLLARCLQAAGEADRATGRPRLPGLRLARPGEFTERAFLNDKIDLAQAEAIADLIDASTEAAARSASRSLAGAFSDEIHRLRDALVHLRMLVEATLDFPEEEIDFLRKADAHGQLAALQRTLAEVMGRTRQGALLREGIKVVIAGQPNAGKSSLLNALAGAELAIVTPIAGTTRDKVQQTIQIEGVPLHVIDTAGLRESDDEVERIGIERAWQEIAAADAVLFLHDLTRAGQPDYEAADAEIAARLARMAPAHVPVVDVWNKSDRAEGSAAAGQGGVATASASGRAAAVRLSARTGEGLDGLRRVLLDIAGWQSAPEGIYTARARHLEALRAVDMHLMEAAAQLQCDGPALDLLAEELRLAQQALNAITGEFTSDDLLGVIFSSFCIGK</sequence>
<keyword id="KW-0963">Cytoplasm</keyword>
<keyword id="KW-0342">GTP-binding</keyword>
<keyword id="KW-0378">Hydrolase</keyword>
<keyword id="KW-0460">Magnesium</keyword>
<keyword id="KW-0479">Metal-binding</keyword>
<keyword id="KW-0547">Nucleotide-binding</keyword>
<keyword id="KW-0630">Potassium</keyword>
<keyword id="KW-0819">tRNA processing</keyword>
<reference key="1">
    <citation type="submission" date="2006-12" db="EMBL/GenBank/DDBJ databases">
        <title>Complete sequence of Acidovorax avenae subsp. citrulli AAC00-1.</title>
        <authorList>
            <person name="Copeland A."/>
            <person name="Lucas S."/>
            <person name="Lapidus A."/>
            <person name="Barry K."/>
            <person name="Detter J.C."/>
            <person name="Glavina del Rio T."/>
            <person name="Dalin E."/>
            <person name="Tice H."/>
            <person name="Pitluck S."/>
            <person name="Kiss H."/>
            <person name="Brettin T."/>
            <person name="Bruce D."/>
            <person name="Han C."/>
            <person name="Tapia R."/>
            <person name="Gilna P."/>
            <person name="Schmutz J."/>
            <person name="Larimer F."/>
            <person name="Land M."/>
            <person name="Hauser L."/>
            <person name="Kyrpides N."/>
            <person name="Kim E."/>
            <person name="Stahl D."/>
            <person name="Richardson P."/>
        </authorList>
    </citation>
    <scope>NUCLEOTIDE SEQUENCE [LARGE SCALE GENOMIC DNA]</scope>
    <source>
        <strain>AAC00-1</strain>
    </source>
</reference>
<name>MNME_PARC0</name>
<protein>
    <recommendedName>
        <fullName evidence="1">tRNA modification GTPase MnmE</fullName>
        <ecNumber evidence="1">3.6.-.-</ecNumber>
    </recommendedName>
</protein>
<evidence type="ECO:0000255" key="1">
    <source>
        <dbReference type="HAMAP-Rule" id="MF_00379"/>
    </source>
</evidence>